<evidence type="ECO:0000250" key="1">
    <source>
        <dbReference type="UniProtKB" id="P00362"/>
    </source>
</evidence>
<evidence type="ECO:0000250" key="2">
    <source>
        <dbReference type="UniProtKB" id="P54226"/>
    </source>
</evidence>
<evidence type="ECO:0000269" key="3">
    <source>
    </source>
</evidence>
<evidence type="ECO:0000303" key="4">
    <source>
    </source>
</evidence>
<evidence type="ECO:0000305" key="5"/>
<evidence type="ECO:0000305" key="6">
    <source>
    </source>
</evidence>
<evidence type="ECO:0007829" key="7">
    <source>
        <dbReference type="PDB" id="8BR4"/>
    </source>
</evidence>
<comment type="function">
    <text evidence="3">Catalyzes the oxidative phosphorylation of glyceraldehyde 3-phosphate (G3P) to 1,3-bisphosphoglycerate (BPG) using the cofactor NAD. The first reaction step involves the formation of a hemiacetal intermediate between G3P and a cysteine residue, and this hemiacetal intermediate is then oxidized to a thioester, with concomitant reduction of NAD to NADH. The reduced NADH is then exchanged with the second NAD, and the thioester is attacked by a nucleophilic inorganic phosphate to produce BPG.</text>
</comment>
<comment type="catalytic activity">
    <reaction evidence="3">
        <text>D-glyceraldehyde 3-phosphate + phosphate + NAD(+) = (2R)-3-phospho-glyceroyl phosphate + NADH + H(+)</text>
        <dbReference type="Rhea" id="RHEA:10300"/>
        <dbReference type="ChEBI" id="CHEBI:15378"/>
        <dbReference type="ChEBI" id="CHEBI:43474"/>
        <dbReference type="ChEBI" id="CHEBI:57540"/>
        <dbReference type="ChEBI" id="CHEBI:57604"/>
        <dbReference type="ChEBI" id="CHEBI:57945"/>
        <dbReference type="ChEBI" id="CHEBI:59776"/>
        <dbReference type="EC" id="1.2.1.12"/>
    </reaction>
</comment>
<comment type="biophysicochemical properties">
    <kinetics>
        <KM evidence="3">6 mM for Na(2)PO(4)</KM>
        <KM evidence="3">6.2 mM for Na(2)AsO(4)</KM>
        <text evidence="3">kcat is 1670 min(-1) for dehydrogenase activity with G3P.</text>
    </kinetics>
</comment>
<comment type="pathway">
    <text evidence="5">Carbohydrate degradation; glycolysis; pyruvate from D-glyceraldehyde 3-phosphate: step 1/5.</text>
</comment>
<comment type="subunit">
    <text evidence="2">Homotetramer.</text>
</comment>
<comment type="subcellular location">
    <subcellularLocation>
        <location evidence="5">Cytoplasm</location>
    </subcellularLocation>
</comment>
<comment type="similarity">
    <text evidence="5">Belongs to the glyceraldehyde-3-phosphate dehydrogenase family.</text>
</comment>
<organism>
    <name type="scientific">Mycobacterium tuberculosis (strain ATCC 25618 / H37Rv)</name>
    <dbReference type="NCBI Taxonomy" id="83332"/>
    <lineage>
        <taxon>Bacteria</taxon>
        <taxon>Bacillati</taxon>
        <taxon>Actinomycetota</taxon>
        <taxon>Actinomycetes</taxon>
        <taxon>Mycobacteriales</taxon>
        <taxon>Mycobacteriaceae</taxon>
        <taxon>Mycobacterium</taxon>
        <taxon>Mycobacterium tuberculosis complex</taxon>
    </lineage>
</organism>
<dbReference type="EC" id="1.2.1.12" evidence="3"/>
<dbReference type="EMBL" id="AL123456">
    <property type="protein sequence ID" value="CCP44195.1"/>
    <property type="molecule type" value="Genomic_DNA"/>
</dbReference>
<dbReference type="PIR" id="G70915">
    <property type="entry name" value="G70915"/>
</dbReference>
<dbReference type="RefSeq" id="NP_215952.1">
    <property type="nucleotide sequence ID" value="NC_000962.3"/>
</dbReference>
<dbReference type="RefSeq" id="WP_003407390.1">
    <property type="nucleotide sequence ID" value="NZ_NVQJ01000038.1"/>
</dbReference>
<dbReference type="PDB" id="8BR4">
    <property type="method" value="X-ray"/>
    <property type="resolution" value="3.29 A"/>
    <property type="chains" value="A/B/C/D/E/F/G/H/I/J/K/L/M/N/O/P=1-339"/>
</dbReference>
<dbReference type="PDBsum" id="8BR4"/>
<dbReference type="SMR" id="P9WN83"/>
<dbReference type="FunCoup" id="P9WN83">
    <property type="interactions" value="432"/>
</dbReference>
<dbReference type="STRING" id="83332.Rv1436"/>
<dbReference type="PaxDb" id="83332-Rv1436"/>
<dbReference type="DNASU" id="886632"/>
<dbReference type="GeneID" id="45425414"/>
<dbReference type="GeneID" id="886632"/>
<dbReference type="KEGG" id="mtu:Rv1436"/>
<dbReference type="KEGG" id="mtv:RVBD_1436"/>
<dbReference type="TubercuList" id="Rv1436"/>
<dbReference type="eggNOG" id="COG0136">
    <property type="taxonomic scope" value="Bacteria"/>
</dbReference>
<dbReference type="InParanoid" id="P9WN83"/>
<dbReference type="OrthoDB" id="9803304at2"/>
<dbReference type="PhylomeDB" id="P9WN83"/>
<dbReference type="BRENDA" id="1.2.1.12">
    <property type="organism ID" value="3445"/>
</dbReference>
<dbReference type="UniPathway" id="UPA00109">
    <property type="reaction ID" value="UER00184"/>
</dbReference>
<dbReference type="Proteomes" id="UP000001584">
    <property type="component" value="Chromosome"/>
</dbReference>
<dbReference type="GO" id="GO:0005829">
    <property type="term" value="C:cytosol"/>
    <property type="evidence" value="ECO:0007005"/>
    <property type="project" value="MTBBASE"/>
</dbReference>
<dbReference type="GO" id="GO:0005576">
    <property type="term" value="C:extracellular region"/>
    <property type="evidence" value="ECO:0007005"/>
    <property type="project" value="MTBBASE"/>
</dbReference>
<dbReference type="GO" id="GO:0009274">
    <property type="term" value="C:peptidoglycan-based cell wall"/>
    <property type="evidence" value="ECO:0007005"/>
    <property type="project" value="MTBBASE"/>
</dbReference>
<dbReference type="GO" id="GO:0005886">
    <property type="term" value="C:plasma membrane"/>
    <property type="evidence" value="ECO:0007005"/>
    <property type="project" value="MTBBASE"/>
</dbReference>
<dbReference type="GO" id="GO:0004365">
    <property type="term" value="F:glyceraldehyde-3-phosphate dehydrogenase (NAD+) (phosphorylating) activity"/>
    <property type="evidence" value="ECO:0000314"/>
    <property type="project" value="UniProtKB"/>
</dbReference>
<dbReference type="GO" id="GO:0051287">
    <property type="term" value="F:NAD binding"/>
    <property type="evidence" value="ECO:0000314"/>
    <property type="project" value="UniProtKB"/>
</dbReference>
<dbReference type="GO" id="GO:0050661">
    <property type="term" value="F:NADP binding"/>
    <property type="evidence" value="ECO:0007669"/>
    <property type="project" value="InterPro"/>
</dbReference>
<dbReference type="GO" id="GO:0006006">
    <property type="term" value="P:glucose metabolic process"/>
    <property type="evidence" value="ECO:0000318"/>
    <property type="project" value="GO_Central"/>
</dbReference>
<dbReference type="GO" id="GO:0006096">
    <property type="term" value="P:glycolytic process"/>
    <property type="evidence" value="ECO:0007669"/>
    <property type="project" value="UniProtKB-UniPathway"/>
</dbReference>
<dbReference type="CDD" id="cd18126">
    <property type="entry name" value="GAPDH_I_C"/>
    <property type="match status" value="1"/>
</dbReference>
<dbReference type="CDD" id="cd05214">
    <property type="entry name" value="GAPDH_I_N"/>
    <property type="match status" value="1"/>
</dbReference>
<dbReference type="FunFam" id="3.30.360.10:FF:000002">
    <property type="entry name" value="Glyceraldehyde-3-phosphate dehydrogenase"/>
    <property type="match status" value="1"/>
</dbReference>
<dbReference type="FunFam" id="3.40.50.720:FF:000001">
    <property type="entry name" value="Glyceraldehyde-3-phosphate dehydrogenase"/>
    <property type="match status" value="1"/>
</dbReference>
<dbReference type="Gene3D" id="3.30.360.10">
    <property type="entry name" value="Dihydrodipicolinate Reductase, domain 2"/>
    <property type="match status" value="1"/>
</dbReference>
<dbReference type="Gene3D" id="3.40.50.720">
    <property type="entry name" value="NAD(P)-binding Rossmann-like Domain"/>
    <property type="match status" value="1"/>
</dbReference>
<dbReference type="InterPro" id="IPR020831">
    <property type="entry name" value="GlycerAld/Erythrose_P_DH"/>
</dbReference>
<dbReference type="InterPro" id="IPR020830">
    <property type="entry name" value="GlycerAld_3-P_DH_AS"/>
</dbReference>
<dbReference type="InterPro" id="IPR020829">
    <property type="entry name" value="GlycerAld_3-P_DH_cat"/>
</dbReference>
<dbReference type="InterPro" id="IPR020828">
    <property type="entry name" value="GlycerAld_3-P_DH_NAD(P)-bd"/>
</dbReference>
<dbReference type="InterPro" id="IPR006424">
    <property type="entry name" value="Glyceraldehyde-3-P_DH_1"/>
</dbReference>
<dbReference type="InterPro" id="IPR036291">
    <property type="entry name" value="NAD(P)-bd_dom_sf"/>
</dbReference>
<dbReference type="NCBIfam" id="TIGR01534">
    <property type="entry name" value="GAPDH-I"/>
    <property type="match status" value="1"/>
</dbReference>
<dbReference type="PANTHER" id="PTHR43148">
    <property type="entry name" value="GLYCERALDEHYDE-3-PHOSPHATE DEHYDROGENASE 2"/>
    <property type="match status" value="1"/>
</dbReference>
<dbReference type="Pfam" id="PF02800">
    <property type="entry name" value="Gp_dh_C"/>
    <property type="match status" value="1"/>
</dbReference>
<dbReference type="Pfam" id="PF00044">
    <property type="entry name" value="Gp_dh_N"/>
    <property type="match status" value="1"/>
</dbReference>
<dbReference type="PIRSF" id="PIRSF000149">
    <property type="entry name" value="GAP_DH"/>
    <property type="match status" value="1"/>
</dbReference>
<dbReference type="PRINTS" id="PR00078">
    <property type="entry name" value="G3PDHDRGNASE"/>
</dbReference>
<dbReference type="SMART" id="SM00846">
    <property type="entry name" value="Gp_dh_N"/>
    <property type="match status" value="1"/>
</dbReference>
<dbReference type="SUPFAM" id="SSF55347">
    <property type="entry name" value="Glyceraldehyde-3-phosphate dehydrogenase-like, C-terminal domain"/>
    <property type="match status" value="1"/>
</dbReference>
<dbReference type="SUPFAM" id="SSF51735">
    <property type="entry name" value="NAD(P)-binding Rossmann-fold domains"/>
    <property type="match status" value="1"/>
</dbReference>
<dbReference type="PROSITE" id="PS00071">
    <property type="entry name" value="GAPDH"/>
    <property type="match status" value="1"/>
</dbReference>
<feature type="chain" id="PRO_0000145671" description="Glyceraldehyde-3-phosphate dehydrogenase">
    <location>
        <begin position="1"/>
        <end position="339"/>
    </location>
</feature>
<feature type="active site" description="Nucleophile" evidence="6">
    <location>
        <position position="158"/>
    </location>
</feature>
<feature type="binding site" evidence="1">
    <location>
        <begin position="12"/>
        <end position="13"/>
    </location>
    <ligand>
        <name>NAD(+)</name>
        <dbReference type="ChEBI" id="CHEBI:57540"/>
    </ligand>
</feature>
<feature type="binding site" evidence="1">
    <location>
        <position position="39"/>
    </location>
    <ligand>
        <name>NAD(+)</name>
        <dbReference type="ChEBI" id="CHEBI:57540"/>
    </ligand>
</feature>
<feature type="binding site" evidence="1">
    <location>
        <position position="84"/>
    </location>
    <ligand>
        <name>NAD(+)</name>
        <dbReference type="ChEBI" id="CHEBI:57540"/>
    </ligand>
</feature>
<feature type="binding site" evidence="1">
    <location>
        <position position="127"/>
    </location>
    <ligand>
        <name>NAD(+)</name>
        <dbReference type="ChEBI" id="CHEBI:57540"/>
    </ligand>
</feature>
<feature type="binding site" evidence="1">
    <location>
        <begin position="157"/>
        <end position="159"/>
    </location>
    <ligand>
        <name>D-glyceraldehyde 3-phosphate</name>
        <dbReference type="ChEBI" id="CHEBI:59776"/>
    </ligand>
</feature>
<feature type="binding site" evidence="1">
    <location>
        <position position="188"/>
    </location>
    <ligand>
        <name>D-glyceraldehyde 3-phosphate</name>
        <dbReference type="ChEBI" id="CHEBI:59776"/>
    </ligand>
</feature>
<feature type="binding site" evidence="1">
    <location>
        <position position="203"/>
    </location>
    <ligand>
        <name>D-glyceraldehyde 3-phosphate</name>
        <dbReference type="ChEBI" id="CHEBI:59776"/>
    </ligand>
</feature>
<feature type="binding site" evidence="1">
    <location>
        <begin position="216"/>
        <end position="217"/>
    </location>
    <ligand>
        <name>D-glyceraldehyde 3-phosphate</name>
        <dbReference type="ChEBI" id="CHEBI:59776"/>
    </ligand>
</feature>
<feature type="binding site" evidence="1">
    <location>
        <position position="239"/>
    </location>
    <ligand>
        <name>D-glyceraldehyde 3-phosphate</name>
        <dbReference type="ChEBI" id="CHEBI:59776"/>
    </ligand>
</feature>
<feature type="binding site" evidence="1">
    <location>
        <position position="320"/>
    </location>
    <ligand>
        <name>NAD(+)</name>
        <dbReference type="ChEBI" id="CHEBI:57540"/>
    </ligand>
</feature>
<feature type="site" description="Activates thiol group during catalysis" evidence="6">
    <location>
        <position position="185"/>
    </location>
</feature>
<feature type="mutagenesis site" description="Loss of dehydrogenase activity." evidence="3">
    <original>C</original>
    <variation>A</variation>
    <location>
        <position position="158"/>
    </location>
</feature>
<feature type="mutagenesis site" description="Same dehydrogenase activity compared to the wild-type." evidence="3">
    <original>C</original>
    <variation>A</variation>
    <location>
        <position position="162"/>
    </location>
</feature>
<feature type="mutagenesis site" description="Loss of dehydrogenase activity." evidence="3">
    <original>H</original>
    <variation>A</variation>
    <location>
        <position position="185"/>
    </location>
</feature>
<feature type="strand" evidence="7">
    <location>
        <begin position="4"/>
        <end position="8"/>
    </location>
</feature>
<feature type="helix" evidence="7">
    <location>
        <begin position="12"/>
        <end position="27"/>
    </location>
</feature>
<feature type="strand" evidence="7">
    <location>
        <begin position="33"/>
        <end position="38"/>
    </location>
</feature>
<feature type="helix" evidence="7">
    <location>
        <begin position="43"/>
        <end position="51"/>
    </location>
</feature>
<feature type="turn" evidence="7">
    <location>
        <begin position="54"/>
        <end position="56"/>
    </location>
</feature>
<feature type="strand" evidence="7">
    <location>
        <begin position="67"/>
        <end position="71"/>
    </location>
</feature>
<feature type="strand" evidence="7">
    <location>
        <begin position="76"/>
        <end position="78"/>
    </location>
</feature>
<feature type="helix" evidence="7">
    <location>
        <begin position="87"/>
        <end position="89"/>
    </location>
</feature>
<feature type="helix" evidence="7">
    <location>
        <begin position="92"/>
        <end position="95"/>
    </location>
</feature>
<feature type="strand" evidence="7">
    <location>
        <begin position="98"/>
        <end position="102"/>
    </location>
</feature>
<feature type="strand" evidence="7">
    <location>
        <begin position="104"/>
        <end position="106"/>
    </location>
</feature>
<feature type="helix" evidence="7">
    <location>
        <begin position="110"/>
        <end position="118"/>
    </location>
</feature>
<feature type="strand" evidence="7">
    <location>
        <begin position="122"/>
        <end position="128"/>
    </location>
</feature>
<feature type="strand" evidence="7">
    <location>
        <begin position="134"/>
        <end position="137"/>
    </location>
</feature>
<feature type="turn" evidence="7">
    <location>
        <begin position="139"/>
        <end position="141"/>
    </location>
</feature>
<feature type="helix" evidence="7">
    <location>
        <begin position="143"/>
        <end position="145"/>
    </location>
</feature>
<feature type="strand" evidence="7">
    <location>
        <begin position="152"/>
        <end position="155"/>
    </location>
</feature>
<feature type="helix" evidence="7">
    <location>
        <begin position="158"/>
        <end position="173"/>
    </location>
</feature>
<feature type="strand" evidence="7">
    <location>
        <begin position="176"/>
        <end position="186"/>
    </location>
</feature>
<feature type="strand" evidence="7">
    <location>
        <begin position="191"/>
        <end position="195"/>
    </location>
</feature>
<feature type="strand" evidence="7">
    <location>
        <begin position="199"/>
        <end position="202"/>
    </location>
</feature>
<feature type="turn" evidence="7">
    <location>
        <begin position="207"/>
        <end position="209"/>
    </location>
</feature>
<feature type="strand" evidence="7">
    <location>
        <begin position="212"/>
        <end position="215"/>
    </location>
</feature>
<feature type="turn" evidence="7">
    <location>
        <begin position="218"/>
        <end position="221"/>
    </location>
</feature>
<feature type="helix" evidence="7">
    <location>
        <begin position="222"/>
        <end position="224"/>
    </location>
</feature>
<feature type="helix" evidence="7">
    <location>
        <begin position="227"/>
        <end position="229"/>
    </location>
</feature>
<feature type="turn" evidence="7">
    <location>
        <begin position="230"/>
        <end position="232"/>
    </location>
</feature>
<feature type="strand" evidence="7">
    <location>
        <begin position="233"/>
        <end position="241"/>
    </location>
</feature>
<feature type="strand" evidence="7">
    <location>
        <begin position="246"/>
        <end position="256"/>
    </location>
</feature>
<feature type="helix" evidence="7">
    <location>
        <begin position="260"/>
        <end position="271"/>
    </location>
</feature>
<feature type="turn" evidence="7">
    <location>
        <begin position="272"/>
        <end position="275"/>
    </location>
</feature>
<feature type="strand" evidence="7">
    <location>
        <begin position="279"/>
        <end position="282"/>
    </location>
</feature>
<feature type="helix" evidence="7">
    <location>
        <begin position="288"/>
        <end position="290"/>
    </location>
</feature>
<feature type="turn" evidence="7">
    <location>
        <begin position="291"/>
        <end position="293"/>
    </location>
</feature>
<feature type="strand" evidence="7">
    <location>
        <begin position="297"/>
        <end position="302"/>
    </location>
</feature>
<feature type="strand" evidence="7">
    <location>
        <begin position="306"/>
        <end position="308"/>
    </location>
</feature>
<feature type="strand" evidence="7">
    <location>
        <begin position="311"/>
        <end position="318"/>
    </location>
</feature>
<feature type="helix" evidence="7">
    <location>
        <begin position="322"/>
        <end position="337"/>
    </location>
</feature>
<reference key="1">
    <citation type="journal article" date="1998" name="Nature">
        <title>Deciphering the biology of Mycobacterium tuberculosis from the complete genome sequence.</title>
        <authorList>
            <person name="Cole S.T."/>
            <person name="Brosch R."/>
            <person name="Parkhill J."/>
            <person name="Garnier T."/>
            <person name="Churcher C.M."/>
            <person name="Harris D.E."/>
            <person name="Gordon S.V."/>
            <person name="Eiglmeier K."/>
            <person name="Gas S."/>
            <person name="Barry C.E. III"/>
            <person name="Tekaia F."/>
            <person name="Badcock K."/>
            <person name="Basham D."/>
            <person name="Brown D."/>
            <person name="Chillingworth T."/>
            <person name="Connor R."/>
            <person name="Davies R.M."/>
            <person name="Devlin K."/>
            <person name="Feltwell T."/>
            <person name="Gentles S."/>
            <person name="Hamlin N."/>
            <person name="Holroyd S."/>
            <person name="Hornsby T."/>
            <person name="Jagels K."/>
            <person name="Krogh A."/>
            <person name="McLean J."/>
            <person name="Moule S."/>
            <person name="Murphy L.D."/>
            <person name="Oliver S."/>
            <person name="Osborne J."/>
            <person name="Quail M.A."/>
            <person name="Rajandream M.A."/>
            <person name="Rogers J."/>
            <person name="Rutter S."/>
            <person name="Seeger K."/>
            <person name="Skelton S."/>
            <person name="Squares S."/>
            <person name="Squares R."/>
            <person name="Sulston J.E."/>
            <person name="Taylor K."/>
            <person name="Whitehead S."/>
            <person name="Barrell B.G."/>
        </authorList>
    </citation>
    <scope>NUCLEOTIDE SEQUENCE [LARGE SCALE GENOMIC DNA]</scope>
    <source>
        <strain>ATCC 25618 / H37Rv</strain>
    </source>
</reference>
<reference key="2">
    <citation type="journal article" date="2011" name="Mol. Cell. Proteomics">
        <title>Proteogenomic analysis of Mycobacterium tuberculosis by high resolution mass spectrometry.</title>
        <authorList>
            <person name="Kelkar D.S."/>
            <person name="Kumar D."/>
            <person name="Kumar P."/>
            <person name="Balakrishnan L."/>
            <person name="Muthusamy B."/>
            <person name="Yadav A.K."/>
            <person name="Shrivastava P."/>
            <person name="Marimuthu A."/>
            <person name="Anand S."/>
            <person name="Sundaram H."/>
            <person name="Kingsbury R."/>
            <person name="Harsha H.C."/>
            <person name="Nair B."/>
            <person name="Prasad T.S."/>
            <person name="Chauhan D.S."/>
            <person name="Katoch K."/>
            <person name="Katoch V.M."/>
            <person name="Kumar P."/>
            <person name="Chaerkady R."/>
            <person name="Ramachandran S."/>
            <person name="Dash D."/>
            <person name="Pandey A."/>
        </authorList>
    </citation>
    <scope>IDENTIFICATION BY MASS SPECTROMETRY [LARGE SCALE ANALYSIS]</scope>
    <source>
        <strain>ATCC 25618 / H37Rv</strain>
    </source>
</reference>
<reference key="3">
    <citation type="journal article" date="2013" name="Arch. Biochem. Biophys.">
        <title>Kinetic and mechanistic characterization of the glyceraldehyde 3-phosphate dehydrogenase from Mycobacterium tuberculosis.</title>
        <authorList>
            <person name="Wolfson-Stofko B."/>
            <person name="Hadi T."/>
            <person name="Blanchard J.S."/>
        </authorList>
    </citation>
    <scope>FUNCTION</scope>
    <scope>CATALYTIC ACTIVITY</scope>
    <scope>BIOPHYSICOCHEMICAL PROPERTIES</scope>
    <scope>MUTAGENESIS OF CYS-158; CYS-162 AND HIS-185</scope>
    <scope>REACTION MECHANISM</scope>
</reference>
<gene>
    <name type="primary">gap</name>
    <name type="ordered locus">Rv1436</name>
    <name type="ORF">MTCY493.18c</name>
</gene>
<protein>
    <recommendedName>
        <fullName evidence="4">Glyceraldehyde-3-phosphate dehydrogenase</fullName>
        <shortName evidence="4">GAPDH</shortName>
        <ecNumber evidence="3">1.2.1.12</ecNumber>
    </recommendedName>
    <alternativeName>
        <fullName evidence="4">NAD-dependent glyceraldehyde-3-phosphate dehydrogenase</fullName>
    </alternativeName>
</protein>
<proteinExistence type="evidence at protein level"/>
<sequence length="339" mass="35956">MTVRVGINGFGRIGRNFYRALLAQQEQGTADVEVVAANDITDNSTLAHLLKFDSILGRLPCDVGLEGDDTIVVGRAKIKALAVREGPAALPWGDLGVDVVVESTGLFTNAAKAKGHLDAGAKKVIISAPATDEDITIVLGVNDDKYDGSQNIISNASCTTNCLAPLAKVLDDEFGIVKGLMTTIHAYTQDQNLQDGPHKDLRRARAAALNIVPTSTGAAKAIGLVMPQLKGKLDGYALRVPIPTGSVTDLTVDLSTRASVDEINAAFKAAAEGRLKGILKYYDAPIVSSDIVTDPHSSIFDSGLTKVIDDQAKVVSWYDNEWGYSNRLVDLVTLVGKSL</sequence>
<name>G3P_MYCTU</name>
<keyword id="KW-0002">3D-structure</keyword>
<keyword id="KW-0963">Cytoplasm</keyword>
<keyword id="KW-0324">Glycolysis</keyword>
<keyword id="KW-0520">NAD</keyword>
<keyword id="KW-0547">Nucleotide-binding</keyword>
<keyword id="KW-0560">Oxidoreductase</keyword>
<keyword id="KW-1185">Reference proteome</keyword>
<accession>P9WN83</accession>
<accession>L0T894</accession>
<accession>O06822</accession>
<accession>P64178</accession>